<proteinExistence type="inferred from homology"/>
<reference key="1">
    <citation type="journal article" date="2005" name="Nature">
        <title>Sequencing of Aspergillus nidulans and comparative analysis with A. fumigatus and A. oryzae.</title>
        <authorList>
            <person name="Galagan J.E."/>
            <person name="Calvo S.E."/>
            <person name="Cuomo C."/>
            <person name="Ma L.-J."/>
            <person name="Wortman J.R."/>
            <person name="Batzoglou S."/>
            <person name="Lee S.-I."/>
            <person name="Bastuerkmen M."/>
            <person name="Spevak C.C."/>
            <person name="Clutterbuck J."/>
            <person name="Kapitonov V."/>
            <person name="Jurka J."/>
            <person name="Scazzocchio C."/>
            <person name="Farman M.L."/>
            <person name="Butler J."/>
            <person name="Purcell S."/>
            <person name="Harris S."/>
            <person name="Braus G.H."/>
            <person name="Draht O."/>
            <person name="Busch S."/>
            <person name="D'Enfert C."/>
            <person name="Bouchier C."/>
            <person name="Goldman G.H."/>
            <person name="Bell-Pedersen D."/>
            <person name="Griffiths-Jones S."/>
            <person name="Doonan J.H."/>
            <person name="Yu J."/>
            <person name="Vienken K."/>
            <person name="Pain A."/>
            <person name="Freitag M."/>
            <person name="Selker E.U."/>
            <person name="Archer D.B."/>
            <person name="Penalva M.A."/>
            <person name="Oakley B.R."/>
            <person name="Momany M."/>
            <person name="Tanaka T."/>
            <person name="Kumagai T."/>
            <person name="Asai K."/>
            <person name="Machida M."/>
            <person name="Nierman W.C."/>
            <person name="Denning D.W."/>
            <person name="Caddick M.X."/>
            <person name="Hynes M."/>
            <person name="Paoletti M."/>
            <person name="Fischer R."/>
            <person name="Miller B.L."/>
            <person name="Dyer P.S."/>
            <person name="Sachs M.S."/>
            <person name="Osmani S.A."/>
            <person name="Birren B.W."/>
        </authorList>
    </citation>
    <scope>NUCLEOTIDE SEQUENCE [LARGE SCALE GENOMIC DNA]</scope>
    <source>
        <strain>FGSC A4 / ATCC 38163 / CBS 112.46 / NRRL 194 / M139</strain>
    </source>
</reference>
<reference key="2">
    <citation type="journal article" date="2009" name="Fungal Genet. Biol.">
        <title>The 2008 update of the Aspergillus nidulans genome annotation: a community effort.</title>
        <authorList>
            <person name="Wortman J.R."/>
            <person name="Gilsenan J.M."/>
            <person name="Joardar V."/>
            <person name="Deegan J."/>
            <person name="Clutterbuck J."/>
            <person name="Andersen M.R."/>
            <person name="Archer D."/>
            <person name="Bencina M."/>
            <person name="Braus G."/>
            <person name="Coutinho P."/>
            <person name="von Dohren H."/>
            <person name="Doonan J."/>
            <person name="Driessen A.J."/>
            <person name="Durek P."/>
            <person name="Espeso E."/>
            <person name="Fekete E."/>
            <person name="Flipphi M."/>
            <person name="Estrada C.G."/>
            <person name="Geysens S."/>
            <person name="Goldman G."/>
            <person name="de Groot P.W."/>
            <person name="Hansen K."/>
            <person name="Harris S.D."/>
            <person name="Heinekamp T."/>
            <person name="Helmstaedt K."/>
            <person name="Henrissat B."/>
            <person name="Hofmann G."/>
            <person name="Homan T."/>
            <person name="Horio T."/>
            <person name="Horiuchi H."/>
            <person name="James S."/>
            <person name="Jones M."/>
            <person name="Karaffa L."/>
            <person name="Karanyi Z."/>
            <person name="Kato M."/>
            <person name="Keller N."/>
            <person name="Kelly D.E."/>
            <person name="Kiel J.A."/>
            <person name="Kim J.M."/>
            <person name="van der Klei I.J."/>
            <person name="Klis F.M."/>
            <person name="Kovalchuk A."/>
            <person name="Krasevec N."/>
            <person name="Kubicek C.P."/>
            <person name="Liu B."/>
            <person name="Maccabe A."/>
            <person name="Meyer V."/>
            <person name="Mirabito P."/>
            <person name="Miskei M."/>
            <person name="Mos M."/>
            <person name="Mullins J."/>
            <person name="Nelson D.R."/>
            <person name="Nielsen J."/>
            <person name="Oakley B.R."/>
            <person name="Osmani S.A."/>
            <person name="Pakula T."/>
            <person name="Paszewski A."/>
            <person name="Paulsen I."/>
            <person name="Pilsyk S."/>
            <person name="Pocsi I."/>
            <person name="Punt P.J."/>
            <person name="Ram A.F."/>
            <person name="Ren Q."/>
            <person name="Robellet X."/>
            <person name="Robson G."/>
            <person name="Seiboth B."/>
            <person name="van Solingen P."/>
            <person name="Specht T."/>
            <person name="Sun J."/>
            <person name="Taheri-Talesh N."/>
            <person name="Takeshita N."/>
            <person name="Ussery D."/>
            <person name="vanKuyk P.A."/>
            <person name="Visser H."/>
            <person name="van de Vondervoort P.J."/>
            <person name="de Vries R.P."/>
            <person name="Walton J."/>
            <person name="Xiang X."/>
            <person name="Xiong Y."/>
            <person name="Zeng A.P."/>
            <person name="Brandt B.W."/>
            <person name="Cornell M.J."/>
            <person name="van den Hondel C.A."/>
            <person name="Visser J."/>
            <person name="Oliver S.G."/>
            <person name="Turner G."/>
        </authorList>
    </citation>
    <scope>GENOME REANNOTATION</scope>
    <source>
        <strain>FGSC A4 / ATCC 38163 / CBS 112.46 / NRRL 194 / M139</strain>
    </source>
</reference>
<keyword id="KW-0968">Cytoplasmic vesicle</keyword>
<keyword id="KW-0256">Endoplasmic reticulum</keyword>
<keyword id="KW-0931">ER-Golgi transport</keyword>
<keyword id="KW-0472">Membrane</keyword>
<keyword id="KW-0509">mRNA transport</keyword>
<keyword id="KW-0906">Nuclear pore complex</keyword>
<keyword id="KW-0539">Nucleus</keyword>
<keyword id="KW-0653">Protein transport</keyword>
<keyword id="KW-1185">Reference proteome</keyword>
<keyword id="KW-0677">Repeat</keyword>
<keyword id="KW-0811">Translocation</keyword>
<keyword id="KW-0813">Transport</keyword>
<keyword id="KW-0853">WD repeat</keyword>
<sequence length="309" mass="34072">MAAAQVISNSGHDDMIHDAGLDYYGRRLATCSSDKTIKIFEIEGDTHKLVETLKGHEGPVWCVEWAHPKFGTILASSSYDGKVLIWREQHQSSTAPIGSGAWTKVFDFSLHTASVNMISWAPHETGCLLACASSDGHVSVLEFRDNSWTHQIFHAHGMGVNSISWAPAASPGSLVSSNPGIGQQRRFVTGGSDNLLKIWDYNPETKTYNATQTLEGHSDWVRDVAWSPSILSKSYIASASQDKTVRVWTADASNPGQWTSQVLEFDNVLWRVSWSPSGNILAVSGGDNKVSLWKENLRGQWEKVKDIEE</sequence>
<accession>Q5B563</accession>
<accession>C8V976</accession>
<evidence type="ECO:0000250" key="1"/>
<evidence type="ECO:0000250" key="2">
    <source>
        <dbReference type="UniProtKB" id="Q04491"/>
    </source>
</evidence>
<evidence type="ECO:0000305" key="3"/>
<protein>
    <recommendedName>
        <fullName>Protein transport protein sec13</fullName>
    </recommendedName>
</protein>
<organism>
    <name type="scientific">Emericella nidulans (strain FGSC A4 / ATCC 38163 / CBS 112.46 / NRRL 194 / M139)</name>
    <name type="common">Aspergillus nidulans</name>
    <dbReference type="NCBI Taxonomy" id="227321"/>
    <lineage>
        <taxon>Eukaryota</taxon>
        <taxon>Fungi</taxon>
        <taxon>Dikarya</taxon>
        <taxon>Ascomycota</taxon>
        <taxon>Pezizomycotina</taxon>
        <taxon>Eurotiomycetes</taxon>
        <taxon>Eurotiomycetidae</taxon>
        <taxon>Eurotiales</taxon>
        <taxon>Aspergillaceae</taxon>
        <taxon>Aspergillus</taxon>
        <taxon>Aspergillus subgen. Nidulantes</taxon>
    </lineage>
</organism>
<gene>
    <name type="primary">sec13</name>
    <name type="ORF">AN4317</name>
</gene>
<name>SEC13_EMENI</name>
<feature type="chain" id="PRO_0000295415" description="Protein transport protein sec13">
    <location>
        <begin position="1"/>
        <end position="309"/>
    </location>
</feature>
<feature type="repeat" description="WD 1">
    <location>
        <begin position="11"/>
        <end position="50"/>
    </location>
</feature>
<feature type="repeat" description="WD 2">
    <location>
        <begin position="55"/>
        <end position="96"/>
    </location>
</feature>
<feature type="repeat" description="WD 3">
    <location>
        <begin position="110"/>
        <end position="151"/>
    </location>
</feature>
<feature type="repeat" description="WD 4">
    <location>
        <begin position="155"/>
        <end position="209"/>
    </location>
</feature>
<feature type="repeat" description="WD 5">
    <location>
        <begin position="216"/>
        <end position="258"/>
    </location>
</feature>
<feature type="repeat" description="WD 6">
    <location>
        <begin position="264"/>
        <end position="303"/>
    </location>
</feature>
<dbReference type="EMBL" id="AACD01000075">
    <property type="protein sequence ID" value="EAA60478.1"/>
    <property type="molecule type" value="Genomic_DNA"/>
</dbReference>
<dbReference type="EMBL" id="BN001303">
    <property type="protein sequence ID" value="CBF77777.1"/>
    <property type="molecule type" value="Genomic_DNA"/>
</dbReference>
<dbReference type="RefSeq" id="XP_661921.1">
    <property type="nucleotide sequence ID" value="XM_656829.1"/>
</dbReference>
<dbReference type="SMR" id="Q5B563"/>
<dbReference type="FunCoup" id="Q5B563">
    <property type="interactions" value="1052"/>
</dbReference>
<dbReference type="STRING" id="227321.Q5B563"/>
<dbReference type="EnsemblFungi" id="CBF77777">
    <property type="protein sequence ID" value="CBF77777"/>
    <property type="gene ID" value="ANIA_04317"/>
</dbReference>
<dbReference type="KEGG" id="ani:ANIA_04317"/>
<dbReference type="VEuPathDB" id="FungiDB:AN4317"/>
<dbReference type="eggNOG" id="KOG1332">
    <property type="taxonomic scope" value="Eukaryota"/>
</dbReference>
<dbReference type="HOGENOM" id="CLU_032441_0_1_1"/>
<dbReference type="InParanoid" id="Q5B563"/>
<dbReference type="OMA" id="IWKEEGD"/>
<dbReference type="OrthoDB" id="364224at2759"/>
<dbReference type="Proteomes" id="UP000000560">
    <property type="component" value="Chromosome III"/>
</dbReference>
<dbReference type="GO" id="GO:0030127">
    <property type="term" value="C:COPII vesicle coat"/>
    <property type="evidence" value="ECO:0000318"/>
    <property type="project" value="GO_Central"/>
</dbReference>
<dbReference type="GO" id="GO:0005789">
    <property type="term" value="C:endoplasmic reticulum membrane"/>
    <property type="evidence" value="ECO:0007669"/>
    <property type="project" value="UniProtKB-SubCell"/>
</dbReference>
<dbReference type="GO" id="GO:0061700">
    <property type="term" value="C:GATOR2 complex"/>
    <property type="evidence" value="ECO:0007669"/>
    <property type="project" value="EnsemblFungi"/>
</dbReference>
<dbReference type="GO" id="GO:0005643">
    <property type="term" value="C:nuclear pore"/>
    <property type="evidence" value="ECO:0000314"/>
    <property type="project" value="AspGD"/>
</dbReference>
<dbReference type="GO" id="GO:0031080">
    <property type="term" value="C:nuclear pore outer ring"/>
    <property type="evidence" value="ECO:0000318"/>
    <property type="project" value="GO_Central"/>
</dbReference>
<dbReference type="GO" id="GO:0005198">
    <property type="term" value="F:structural molecule activity"/>
    <property type="evidence" value="ECO:0000318"/>
    <property type="project" value="GO_Central"/>
</dbReference>
<dbReference type="GO" id="GO:0090114">
    <property type="term" value="P:COPII-coated vesicle budding"/>
    <property type="evidence" value="ECO:0000318"/>
    <property type="project" value="GO_Central"/>
</dbReference>
<dbReference type="GO" id="GO:0036503">
    <property type="term" value="P:ERAD pathway"/>
    <property type="evidence" value="ECO:0007669"/>
    <property type="project" value="EnsemblFungi"/>
</dbReference>
<dbReference type="GO" id="GO:0051028">
    <property type="term" value="P:mRNA transport"/>
    <property type="evidence" value="ECO:0007669"/>
    <property type="project" value="UniProtKB-KW"/>
</dbReference>
<dbReference type="GO" id="GO:0051664">
    <property type="term" value="P:nuclear pore localization"/>
    <property type="evidence" value="ECO:0007669"/>
    <property type="project" value="EnsemblFungi"/>
</dbReference>
<dbReference type="GO" id="GO:0045893">
    <property type="term" value="P:positive regulation of DNA-templated transcription"/>
    <property type="evidence" value="ECO:0007669"/>
    <property type="project" value="EnsemblFungi"/>
</dbReference>
<dbReference type="GO" id="GO:1902953">
    <property type="term" value="P:positive regulation of ER to Golgi vesicle-mediated transport"/>
    <property type="evidence" value="ECO:0007669"/>
    <property type="project" value="EnsemblFungi"/>
</dbReference>
<dbReference type="GO" id="GO:0070863">
    <property type="term" value="P:positive regulation of protein exit from endoplasmic reticulum"/>
    <property type="evidence" value="ECO:0007669"/>
    <property type="project" value="EnsemblFungi"/>
</dbReference>
<dbReference type="GO" id="GO:0032008">
    <property type="term" value="P:positive regulation of TOR signaling"/>
    <property type="evidence" value="ECO:0000318"/>
    <property type="project" value="GO_Central"/>
</dbReference>
<dbReference type="GO" id="GO:1904263">
    <property type="term" value="P:positive regulation of TORC1 signaling"/>
    <property type="evidence" value="ECO:0007669"/>
    <property type="project" value="EnsemblFungi"/>
</dbReference>
<dbReference type="GO" id="GO:0032527">
    <property type="term" value="P:protein exit from endoplasmic reticulum"/>
    <property type="evidence" value="ECO:0000318"/>
    <property type="project" value="GO_Central"/>
</dbReference>
<dbReference type="GO" id="GO:0006606">
    <property type="term" value="P:protein import into nucleus"/>
    <property type="evidence" value="ECO:0000318"/>
    <property type="project" value="GO_Central"/>
</dbReference>
<dbReference type="FunFam" id="2.130.10.10:FF:000017">
    <property type="entry name" value="SEC13 homolog (S. cerevisiae)"/>
    <property type="match status" value="1"/>
</dbReference>
<dbReference type="Gene3D" id="2.130.10.10">
    <property type="entry name" value="YVTN repeat-like/Quinoprotein amine dehydrogenase"/>
    <property type="match status" value="1"/>
</dbReference>
<dbReference type="InterPro" id="IPR020472">
    <property type="entry name" value="G-protein_beta_WD-40_rep"/>
</dbReference>
<dbReference type="InterPro" id="IPR037363">
    <property type="entry name" value="Sec13/Seh1_fam"/>
</dbReference>
<dbReference type="InterPro" id="IPR015943">
    <property type="entry name" value="WD40/YVTN_repeat-like_dom_sf"/>
</dbReference>
<dbReference type="InterPro" id="IPR036322">
    <property type="entry name" value="WD40_repeat_dom_sf"/>
</dbReference>
<dbReference type="InterPro" id="IPR001680">
    <property type="entry name" value="WD40_rpt"/>
</dbReference>
<dbReference type="PANTHER" id="PTHR11024">
    <property type="entry name" value="NUCLEAR PORE COMPLEX PROTEIN SEC13 / SEH1 FAMILY MEMBER"/>
    <property type="match status" value="1"/>
</dbReference>
<dbReference type="PANTHER" id="PTHR11024:SF2">
    <property type="entry name" value="PROTEIN SEC13 HOMOLOG"/>
    <property type="match status" value="1"/>
</dbReference>
<dbReference type="Pfam" id="PF00400">
    <property type="entry name" value="WD40"/>
    <property type="match status" value="6"/>
</dbReference>
<dbReference type="PRINTS" id="PR00320">
    <property type="entry name" value="GPROTEINBRPT"/>
</dbReference>
<dbReference type="SMART" id="SM00320">
    <property type="entry name" value="WD40"/>
    <property type="match status" value="6"/>
</dbReference>
<dbReference type="SUPFAM" id="SSF50978">
    <property type="entry name" value="WD40 repeat-like"/>
    <property type="match status" value="1"/>
</dbReference>
<dbReference type="PROSITE" id="PS50082">
    <property type="entry name" value="WD_REPEATS_2"/>
    <property type="match status" value="4"/>
</dbReference>
<dbReference type="PROSITE" id="PS50294">
    <property type="entry name" value="WD_REPEATS_REGION"/>
    <property type="match status" value="1"/>
</dbReference>
<comment type="function">
    <text evidence="2">Component of the coat protein complex II (COPII) which promotes the formation of transport vesicles from the endoplasmic reticulum (ER). The coat has two main functions, the physical deformation of the endoplasmic reticulum membrane into vesicles and the selection of cargo molecules. It also functions as a component of the nuclear pore complex (NPC). NPC components, collectively referred to as nucleoporins (NUPs), can play the role of both NPC structural components and of docking or interaction partners for transiently associated nuclear transport factors. Sec13 is required for efficient mRNA export from the nucleus to the cytoplasm and for correct nuclear pore biogenesis and distribution (By similarity).</text>
</comment>
<comment type="subunit">
    <text evidence="2">The COPII coat is composed of at least 5 proteins: the SEC23/24 complex, the SEC13/31 complex, and the protein SAR1. Component of the nuclear pore complex (NPC). NPC constitutes the exclusive means of nucleocytoplasmic transport. NPCs allow the passive diffusion of ions and small molecules and the active, nuclear transport receptor-mediated bidirectional transport of macromolecules such as proteins, RNAs, ribonucleoparticles (RNPs), and ribosomal subunits across the nuclear envelope. Due to its 8-fold rotational symmetry, all subunits are present with 8 copies or multiples thereof.</text>
</comment>
<comment type="subcellular location">
    <subcellularLocation>
        <location evidence="1">Cytoplasmic vesicle</location>
        <location evidence="1">COPII-coated vesicle membrane</location>
        <topology evidence="1">Peripheral membrane protein</topology>
        <orientation evidence="1">Cytoplasmic side</orientation>
    </subcellularLocation>
    <subcellularLocation>
        <location evidence="1">Endoplasmic reticulum membrane</location>
        <topology evidence="1">Peripheral membrane protein</topology>
        <orientation evidence="1">Cytoplasmic side</orientation>
    </subcellularLocation>
    <subcellularLocation>
        <location evidence="2">Nucleus</location>
        <location evidence="2">Nuclear pore complex</location>
    </subcellularLocation>
</comment>
<comment type="similarity">
    <text evidence="3">Belongs to the WD repeat SEC13 family.</text>
</comment>